<reference key="1">
    <citation type="journal article" date="2010" name="J. Bacteriol.">
        <title>Whole genome sequences of two Xylella fastidiosa strains (M12 and M23) causing almond leaf scorch disease in California.</title>
        <authorList>
            <person name="Chen J."/>
            <person name="Xie G."/>
            <person name="Han S."/>
            <person name="Chertkov O."/>
            <person name="Sims D."/>
            <person name="Civerolo E.L."/>
        </authorList>
    </citation>
    <scope>NUCLEOTIDE SEQUENCE [LARGE SCALE GENOMIC DNA]</scope>
    <source>
        <strain>M12</strain>
    </source>
</reference>
<sequence length="179" mass="19991">MTRLENMYKKEVVPALIKRFGYSNPMAVPRLVKITLNMGVGEAATNKKVLENAVADMAKVSGQKPIVTKSRISVASFKIRNGWPIGCKTTLRRSKMYEFLDRLINISLPCVRDFRGIPPRSFDGRGNFNMGVKEQVVFPEIDFDAVDAIRGMDIAITTTANSDAEAKALLDAFNFPFRN</sequence>
<feature type="chain" id="PRO_1000142477" description="Large ribosomal subunit protein uL5">
    <location>
        <begin position="1"/>
        <end position="179"/>
    </location>
</feature>
<evidence type="ECO:0000255" key="1">
    <source>
        <dbReference type="HAMAP-Rule" id="MF_01333"/>
    </source>
</evidence>
<evidence type="ECO:0000305" key="2"/>
<keyword id="KW-0687">Ribonucleoprotein</keyword>
<keyword id="KW-0689">Ribosomal protein</keyword>
<keyword id="KW-0694">RNA-binding</keyword>
<keyword id="KW-0699">rRNA-binding</keyword>
<keyword id="KW-0820">tRNA-binding</keyword>
<proteinExistence type="inferred from homology"/>
<accession>B0U5L1</accession>
<gene>
    <name evidence="1" type="primary">rplE</name>
    <name type="ordered locus">Xfasm12_0506</name>
</gene>
<protein>
    <recommendedName>
        <fullName evidence="1">Large ribosomal subunit protein uL5</fullName>
    </recommendedName>
    <alternativeName>
        <fullName evidence="2">50S ribosomal protein L5</fullName>
    </alternativeName>
</protein>
<dbReference type="EMBL" id="CP000941">
    <property type="protein sequence ID" value="ACA11515.1"/>
    <property type="molecule type" value="Genomic_DNA"/>
</dbReference>
<dbReference type="RefSeq" id="WP_004086534.1">
    <property type="nucleotide sequence ID" value="NC_010513.1"/>
</dbReference>
<dbReference type="SMR" id="B0U5L1"/>
<dbReference type="KEGG" id="xfm:Xfasm12_0506"/>
<dbReference type="HOGENOM" id="CLU_061015_2_1_6"/>
<dbReference type="GO" id="GO:1990904">
    <property type="term" value="C:ribonucleoprotein complex"/>
    <property type="evidence" value="ECO:0007669"/>
    <property type="project" value="UniProtKB-KW"/>
</dbReference>
<dbReference type="GO" id="GO:0005840">
    <property type="term" value="C:ribosome"/>
    <property type="evidence" value="ECO:0007669"/>
    <property type="project" value="UniProtKB-KW"/>
</dbReference>
<dbReference type="GO" id="GO:0019843">
    <property type="term" value="F:rRNA binding"/>
    <property type="evidence" value="ECO:0007669"/>
    <property type="project" value="UniProtKB-UniRule"/>
</dbReference>
<dbReference type="GO" id="GO:0003735">
    <property type="term" value="F:structural constituent of ribosome"/>
    <property type="evidence" value="ECO:0007669"/>
    <property type="project" value="InterPro"/>
</dbReference>
<dbReference type="GO" id="GO:0000049">
    <property type="term" value="F:tRNA binding"/>
    <property type="evidence" value="ECO:0007669"/>
    <property type="project" value="UniProtKB-UniRule"/>
</dbReference>
<dbReference type="GO" id="GO:0006412">
    <property type="term" value="P:translation"/>
    <property type="evidence" value="ECO:0007669"/>
    <property type="project" value="UniProtKB-UniRule"/>
</dbReference>
<dbReference type="FunFam" id="3.30.1440.10:FF:000001">
    <property type="entry name" value="50S ribosomal protein L5"/>
    <property type="match status" value="1"/>
</dbReference>
<dbReference type="Gene3D" id="3.30.1440.10">
    <property type="match status" value="1"/>
</dbReference>
<dbReference type="HAMAP" id="MF_01333_B">
    <property type="entry name" value="Ribosomal_uL5_B"/>
    <property type="match status" value="1"/>
</dbReference>
<dbReference type="InterPro" id="IPR002132">
    <property type="entry name" value="Ribosomal_uL5"/>
</dbReference>
<dbReference type="InterPro" id="IPR020930">
    <property type="entry name" value="Ribosomal_uL5_bac-type"/>
</dbReference>
<dbReference type="InterPro" id="IPR031309">
    <property type="entry name" value="Ribosomal_uL5_C"/>
</dbReference>
<dbReference type="InterPro" id="IPR020929">
    <property type="entry name" value="Ribosomal_uL5_CS"/>
</dbReference>
<dbReference type="InterPro" id="IPR022803">
    <property type="entry name" value="Ribosomal_uL5_dom_sf"/>
</dbReference>
<dbReference type="InterPro" id="IPR031310">
    <property type="entry name" value="Ribosomal_uL5_N"/>
</dbReference>
<dbReference type="NCBIfam" id="NF000585">
    <property type="entry name" value="PRK00010.1"/>
    <property type="match status" value="1"/>
</dbReference>
<dbReference type="PANTHER" id="PTHR11994">
    <property type="entry name" value="60S RIBOSOMAL PROTEIN L11-RELATED"/>
    <property type="match status" value="1"/>
</dbReference>
<dbReference type="Pfam" id="PF00281">
    <property type="entry name" value="Ribosomal_L5"/>
    <property type="match status" value="1"/>
</dbReference>
<dbReference type="Pfam" id="PF00673">
    <property type="entry name" value="Ribosomal_L5_C"/>
    <property type="match status" value="1"/>
</dbReference>
<dbReference type="PIRSF" id="PIRSF002161">
    <property type="entry name" value="Ribosomal_L5"/>
    <property type="match status" value="1"/>
</dbReference>
<dbReference type="SUPFAM" id="SSF55282">
    <property type="entry name" value="RL5-like"/>
    <property type="match status" value="1"/>
</dbReference>
<dbReference type="PROSITE" id="PS00358">
    <property type="entry name" value="RIBOSOMAL_L5"/>
    <property type="match status" value="1"/>
</dbReference>
<comment type="function">
    <text evidence="1">This is one of the proteins that bind and probably mediate the attachment of the 5S RNA into the large ribosomal subunit, where it forms part of the central protuberance. In the 70S ribosome it contacts protein S13 of the 30S subunit (bridge B1b), connecting the 2 subunits; this bridge is implicated in subunit movement. Contacts the P site tRNA; the 5S rRNA and some of its associated proteins might help stabilize positioning of ribosome-bound tRNAs.</text>
</comment>
<comment type="subunit">
    <text evidence="1">Part of the 50S ribosomal subunit; part of the 5S rRNA/L5/L18/L25 subcomplex. Contacts the 5S rRNA and the P site tRNA. Forms a bridge to the 30S subunit in the 70S ribosome.</text>
</comment>
<comment type="similarity">
    <text evidence="1">Belongs to the universal ribosomal protein uL5 family.</text>
</comment>
<organism>
    <name type="scientific">Xylella fastidiosa (strain M12)</name>
    <dbReference type="NCBI Taxonomy" id="405440"/>
    <lineage>
        <taxon>Bacteria</taxon>
        <taxon>Pseudomonadati</taxon>
        <taxon>Pseudomonadota</taxon>
        <taxon>Gammaproteobacteria</taxon>
        <taxon>Lysobacterales</taxon>
        <taxon>Lysobacteraceae</taxon>
        <taxon>Xylella</taxon>
    </lineage>
</organism>
<name>RL5_XYLFM</name>